<evidence type="ECO:0000250" key="1"/>
<evidence type="ECO:0000255" key="2">
    <source>
        <dbReference type="PROSITE-ProRule" id="PRU01083"/>
    </source>
</evidence>
<evidence type="ECO:0000269" key="3">
    <source>
    </source>
</evidence>
<evidence type="ECO:0000305" key="4"/>
<evidence type="ECO:0007829" key="5">
    <source>
        <dbReference type="PDB" id="1WKQ"/>
    </source>
</evidence>
<name>GUAD_BACSU</name>
<protein>
    <recommendedName>
        <fullName>Guanine deaminase</fullName>
        <shortName>GDEase</shortName>
        <shortName>Guanase</shortName>
        <shortName>Guanine aminase</shortName>
        <ecNumber>3.5.4.3</ecNumber>
    </recommendedName>
    <alternativeName>
        <fullName>Guanine aminohydrolase</fullName>
        <shortName>GAH</shortName>
    </alternativeName>
</protein>
<dbReference type="EC" id="3.5.4.3"/>
<dbReference type="EMBL" id="AJ002571">
    <property type="protein sequence ID" value="CAA05596.1"/>
    <property type="molecule type" value="Genomic_DNA"/>
</dbReference>
<dbReference type="EMBL" id="AL009126">
    <property type="protein sequence ID" value="CAB13174.1"/>
    <property type="molecule type" value="Genomic_DNA"/>
</dbReference>
<dbReference type="PIR" id="F69857">
    <property type="entry name" value="F69857"/>
</dbReference>
<dbReference type="RefSeq" id="WP_003245084.1">
    <property type="nucleotide sequence ID" value="NZ_OZ025638.1"/>
</dbReference>
<dbReference type="PDB" id="1TIY">
    <property type="method" value="X-ray"/>
    <property type="resolution" value="2.50 A"/>
    <property type="chains" value="A/B=1-156"/>
</dbReference>
<dbReference type="PDB" id="1WKQ">
    <property type="method" value="X-ray"/>
    <property type="resolution" value="1.17 A"/>
    <property type="chains" value="A/B=1-156"/>
</dbReference>
<dbReference type="PDBsum" id="1TIY"/>
<dbReference type="PDBsum" id="1WKQ"/>
<dbReference type="SMR" id="O34598"/>
<dbReference type="FunCoup" id="O34598">
    <property type="interactions" value="170"/>
</dbReference>
<dbReference type="STRING" id="224308.BSU13170"/>
<dbReference type="DrugBank" id="DB03366">
    <property type="generic name" value="Imidazole"/>
</dbReference>
<dbReference type="PaxDb" id="224308-BSU13170"/>
<dbReference type="EnsemblBacteria" id="CAB13174">
    <property type="protein sequence ID" value="CAB13174"/>
    <property type="gene ID" value="BSU_13170"/>
</dbReference>
<dbReference type="GeneID" id="936695"/>
<dbReference type="KEGG" id="bsu:BSU13170"/>
<dbReference type="PATRIC" id="fig|224308.179.peg.1430"/>
<dbReference type="eggNOG" id="COG0590">
    <property type="taxonomic scope" value="Bacteria"/>
</dbReference>
<dbReference type="InParanoid" id="O34598"/>
<dbReference type="OrthoDB" id="9802676at2"/>
<dbReference type="PhylomeDB" id="O34598"/>
<dbReference type="BioCyc" id="BSUB:BSU13170-MONOMER"/>
<dbReference type="BRENDA" id="3.5.4.3">
    <property type="organism ID" value="658"/>
</dbReference>
<dbReference type="UniPathway" id="UPA00603">
    <property type="reaction ID" value="UER00660"/>
</dbReference>
<dbReference type="EvolutionaryTrace" id="O34598"/>
<dbReference type="Proteomes" id="UP000001570">
    <property type="component" value="Chromosome"/>
</dbReference>
<dbReference type="GO" id="GO:0008892">
    <property type="term" value="F:guanine deaminase activity"/>
    <property type="evidence" value="ECO:0007669"/>
    <property type="project" value="UniProtKB-EC"/>
</dbReference>
<dbReference type="GO" id="GO:0047974">
    <property type="term" value="F:guanosine deaminase activity"/>
    <property type="evidence" value="ECO:0000318"/>
    <property type="project" value="GO_Central"/>
</dbReference>
<dbReference type="GO" id="GO:0008270">
    <property type="term" value="F:zinc ion binding"/>
    <property type="evidence" value="ECO:0007669"/>
    <property type="project" value="InterPro"/>
</dbReference>
<dbReference type="GO" id="GO:0006147">
    <property type="term" value="P:guanine catabolic process"/>
    <property type="evidence" value="ECO:0007669"/>
    <property type="project" value="UniProtKB-UniPathway"/>
</dbReference>
<dbReference type="GO" id="GO:0006152">
    <property type="term" value="P:purine nucleoside catabolic process"/>
    <property type="evidence" value="ECO:0000318"/>
    <property type="project" value="GO_Central"/>
</dbReference>
<dbReference type="CDD" id="cd01285">
    <property type="entry name" value="nucleoside_deaminase"/>
    <property type="match status" value="1"/>
</dbReference>
<dbReference type="FunFam" id="3.40.140.10:FF:000011">
    <property type="entry name" value="tRNA-specific adenosine deaminase"/>
    <property type="match status" value="1"/>
</dbReference>
<dbReference type="Gene3D" id="3.40.140.10">
    <property type="entry name" value="Cytidine Deaminase, domain 2"/>
    <property type="match status" value="1"/>
</dbReference>
<dbReference type="InterPro" id="IPR016192">
    <property type="entry name" value="APOBEC/CMP_deaminase_Zn-bd"/>
</dbReference>
<dbReference type="InterPro" id="IPR002125">
    <property type="entry name" value="CMP_dCMP_dom"/>
</dbReference>
<dbReference type="InterPro" id="IPR016193">
    <property type="entry name" value="Cytidine_deaminase-like"/>
</dbReference>
<dbReference type="PANTHER" id="PTHR11079:SF161">
    <property type="entry name" value="CMP_DCMP-TYPE DEAMINASE DOMAIN-CONTAINING PROTEIN"/>
    <property type="match status" value="1"/>
</dbReference>
<dbReference type="PANTHER" id="PTHR11079">
    <property type="entry name" value="CYTOSINE DEAMINASE FAMILY MEMBER"/>
    <property type="match status" value="1"/>
</dbReference>
<dbReference type="Pfam" id="PF00383">
    <property type="entry name" value="dCMP_cyt_deam_1"/>
    <property type="match status" value="1"/>
</dbReference>
<dbReference type="SUPFAM" id="SSF53927">
    <property type="entry name" value="Cytidine deaminase-like"/>
    <property type="match status" value="1"/>
</dbReference>
<dbReference type="PROSITE" id="PS00903">
    <property type="entry name" value="CYT_DCMP_DEAMINASES_1"/>
    <property type="match status" value="1"/>
</dbReference>
<dbReference type="PROSITE" id="PS51747">
    <property type="entry name" value="CYT_DCMP_DEAMINASES_2"/>
    <property type="match status" value="1"/>
</dbReference>
<feature type="chain" id="PRO_0000171704" description="Guanine deaminase">
    <location>
        <begin position="1"/>
        <end position="156"/>
    </location>
</feature>
<feature type="domain" description="CMP/dCMP-type deaminase" evidence="2">
    <location>
        <begin position="1"/>
        <end position="132"/>
    </location>
</feature>
<feature type="active site" description="Proton donor" evidence="1">
    <location>
        <position position="55"/>
    </location>
</feature>
<feature type="binding site">
    <location>
        <position position="53"/>
    </location>
    <ligand>
        <name>Zn(2+)</name>
        <dbReference type="ChEBI" id="CHEBI:29105"/>
        <note>catalytic</note>
    </ligand>
</feature>
<feature type="binding site">
    <location>
        <position position="83"/>
    </location>
    <ligand>
        <name>Zn(2+)</name>
        <dbReference type="ChEBI" id="CHEBI:29105"/>
        <note>catalytic</note>
    </ligand>
</feature>
<feature type="binding site">
    <location>
        <position position="86"/>
    </location>
    <ligand>
        <name>Zn(2+)</name>
        <dbReference type="ChEBI" id="CHEBI:29105"/>
        <note>catalytic</note>
    </ligand>
</feature>
<feature type="helix" evidence="5">
    <location>
        <begin position="3"/>
        <end position="19"/>
    </location>
</feature>
<feature type="strand" evidence="5">
    <location>
        <begin position="22"/>
        <end position="25"/>
    </location>
</feature>
<feature type="strand" evidence="5">
    <location>
        <begin position="27"/>
        <end position="32"/>
    </location>
</feature>
<feature type="strand" evidence="5">
    <location>
        <begin position="35"/>
        <end position="41"/>
    </location>
</feature>
<feature type="helix" evidence="5">
    <location>
        <begin position="44"/>
        <end position="47"/>
    </location>
</feature>
<feature type="helix" evidence="5">
    <location>
        <begin position="54"/>
        <end position="66"/>
    </location>
</feature>
<feature type="strand" evidence="5">
    <location>
        <begin position="68"/>
        <end position="70"/>
    </location>
</feature>
<feature type="strand" evidence="5">
    <location>
        <begin position="75"/>
        <end position="80"/>
    </location>
</feature>
<feature type="helix" evidence="5">
    <location>
        <begin position="84"/>
        <end position="93"/>
    </location>
</feature>
<feature type="strand" evidence="5">
    <location>
        <begin position="96"/>
        <end position="102"/>
    </location>
</feature>
<feature type="helix" evidence="5">
    <location>
        <begin position="104"/>
        <end position="109"/>
    </location>
</feature>
<feature type="helix" evidence="5">
    <location>
        <begin position="114"/>
        <end position="121"/>
    </location>
</feature>
<feature type="helix" evidence="5">
    <location>
        <begin position="125"/>
        <end position="127"/>
    </location>
</feature>
<feature type="strand" evidence="5">
    <location>
        <begin position="128"/>
        <end position="130"/>
    </location>
</feature>
<feature type="strand" evidence="5">
    <location>
        <begin position="132"/>
        <end position="134"/>
    </location>
</feature>
<feature type="turn" evidence="5">
    <location>
        <begin position="138"/>
        <end position="141"/>
    </location>
</feature>
<feature type="helix" evidence="5">
    <location>
        <begin position="142"/>
        <end position="149"/>
    </location>
</feature>
<sequence length="156" mass="17156">MNHETFLKRAVTLACEGVNAGIGGPFGAVIVKDGAIIAEGQNNVTTSNDPTAHAEVTAIRKACKVLGAYQLDDCILYTSCEPCPMCLGAIYWARPKAVFYAAEHTDAAEAGFDDSFIYKEIDKPAEERTIPFYQVTLTEHLSPFQAWRNFANKKEY</sequence>
<proteinExistence type="evidence at protein level"/>
<keyword id="KW-0002">3D-structure</keyword>
<keyword id="KW-0378">Hydrolase</keyword>
<keyword id="KW-0479">Metal-binding</keyword>
<keyword id="KW-0659">Purine metabolism</keyword>
<keyword id="KW-1185">Reference proteome</keyword>
<keyword id="KW-0862">Zinc</keyword>
<accession>O34598</accession>
<comment type="function">
    <text evidence="3">Catalyzes the hydrolytic deamination of guanine, producing xanthine and ammonia.</text>
</comment>
<comment type="catalytic activity">
    <reaction>
        <text>guanine + H2O + H(+) = xanthine + NH4(+)</text>
        <dbReference type="Rhea" id="RHEA:14665"/>
        <dbReference type="ChEBI" id="CHEBI:15377"/>
        <dbReference type="ChEBI" id="CHEBI:15378"/>
        <dbReference type="ChEBI" id="CHEBI:16235"/>
        <dbReference type="ChEBI" id="CHEBI:17712"/>
        <dbReference type="ChEBI" id="CHEBI:28938"/>
        <dbReference type="EC" id="3.5.4.3"/>
    </reaction>
</comment>
<comment type="cofactor">
    <cofactor evidence="1">
        <name>Zn(2+)</name>
        <dbReference type="ChEBI" id="CHEBI:29105"/>
    </cofactor>
</comment>
<comment type="pathway">
    <text>Purine metabolism; guanine degradation; xanthine from guanine: step 1/1.</text>
</comment>
<comment type="induction">
    <text>Expressed only during limited or partially limited nitrogen conditions. Can be induced to high levels in the presence of purines or intermediates of the purine catabolic pathway. Expression seems indirectly controlled by TnrA and GlnR.</text>
</comment>
<comment type="similarity">
    <text evidence="4">Belongs to the cytidine and deoxycytidylate deaminase family.</text>
</comment>
<reference key="1">
    <citation type="submission" date="1997-11" db="EMBL/GenBank/DDBJ databases">
        <title>Sequence of the Bacillus subtilis genome between xlyA and ykoR.</title>
        <authorList>
            <person name="Devine K.M."/>
        </authorList>
    </citation>
    <scope>NUCLEOTIDE SEQUENCE [GENOMIC DNA]</scope>
    <source>
        <strain>168</strain>
    </source>
</reference>
<reference key="2">
    <citation type="journal article" date="1997" name="Nature">
        <title>The complete genome sequence of the Gram-positive bacterium Bacillus subtilis.</title>
        <authorList>
            <person name="Kunst F."/>
            <person name="Ogasawara N."/>
            <person name="Moszer I."/>
            <person name="Albertini A.M."/>
            <person name="Alloni G."/>
            <person name="Azevedo V."/>
            <person name="Bertero M.G."/>
            <person name="Bessieres P."/>
            <person name="Bolotin A."/>
            <person name="Borchert S."/>
            <person name="Borriss R."/>
            <person name="Boursier L."/>
            <person name="Brans A."/>
            <person name="Braun M."/>
            <person name="Brignell S.C."/>
            <person name="Bron S."/>
            <person name="Brouillet S."/>
            <person name="Bruschi C.V."/>
            <person name="Caldwell B."/>
            <person name="Capuano V."/>
            <person name="Carter N.M."/>
            <person name="Choi S.-K."/>
            <person name="Codani J.-J."/>
            <person name="Connerton I.F."/>
            <person name="Cummings N.J."/>
            <person name="Daniel R.A."/>
            <person name="Denizot F."/>
            <person name="Devine K.M."/>
            <person name="Duesterhoeft A."/>
            <person name="Ehrlich S.D."/>
            <person name="Emmerson P.T."/>
            <person name="Entian K.-D."/>
            <person name="Errington J."/>
            <person name="Fabret C."/>
            <person name="Ferrari E."/>
            <person name="Foulger D."/>
            <person name="Fritz C."/>
            <person name="Fujita M."/>
            <person name="Fujita Y."/>
            <person name="Fuma S."/>
            <person name="Galizzi A."/>
            <person name="Galleron N."/>
            <person name="Ghim S.-Y."/>
            <person name="Glaser P."/>
            <person name="Goffeau A."/>
            <person name="Golightly E.J."/>
            <person name="Grandi G."/>
            <person name="Guiseppi G."/>
            <person name="Guy B.J."/>
            <person name="Haga K."/>
            <person name="Haiech J."/>
            <person name="Harwood C.R."/>
            <person name="Henaut A."/>
            <person name="Hilbert H."/>
            <person name="Holsappel S."/>
            <person name="Hosono S."/>
            <person name="Hullo M.-F."/>
            <person name="Itaya M."/>
            <person name="Jones L.-M."/>
            <person name="Joris B."/>
            <person name="Karamata D."/>
            <person name="Kasahara Y."/>
            <person name="Klaerr-Blanchard M."/>
            <person name="Klein C."/>
            <person name="Kobayashi Y."/>
            <person name="Koetter P."/>
            <person name="Koningstein G."/>
            <person name="Krogh S."/>
            <person name="Kumano M."/>
            <person name="Kurita K."/>
            <person name="Lapidus A."/>
            <person name="Lardinois S."/>
            <person name="Lauber J."/>
            <person name="Lazarevic V."/>
            <person name="Lee S.-M."/>
            <person name="Levine A."/>
            <person name="Liu H."/>
            <person name="Masuda S."/>
            <person name="Mauel C."/>
            <person name="Medigue C."/>
            <person name="Medina N."/>
            <person name="Mellado R.P."/>
            <person name="Mizuno M."/>
            <person name="Moestl D."/>
            <person name="Nakai S."/>
            <person name="Noback M."/>
            <person name="Noone D."/>
            <person name="O'Reilly M."/>
            <person name="Ogawa K."/>
            <person name="Ogiwara A."/>
            <person name="Oudega B."/>
            <person name="Park S.-H."/>
            <person name="Parro V."/>
            <person name="Pohl T.M."/>
            <person name="Portetelle D."/>
            <person name="Porwollik S."/>
            <person name="Prescott A.M."/>
            <person name="Presecan E."/>
            <person name="Pujic P."/>
            <person name="Purnelle B."/>
            <person name="Rapoport G."/>
            <person name="Rey M."/>
            <person name="Reynolds S."/>
            <person name="Rieger M."/>
            <person name="Rivolta C."/>
            <person name="Rocha E."/>
            <person name="Roche B."/>
            <person name="Rose M."/>
            <person name="Sadaie Y."/>
            <person name="Sato T."/>
            <person name="Scanlan E."/>
            <person name="Schleich S."/>
            <person name="Schroeter R."/>
            <person name="Scoffone F."/>
            <person name="Sekiguchi J."/>
            <person name="Sekowska A."/>
            <person name="Seror S.J."/>
            <person name="Serror P."/>
            <person name="Shin B.-S."/>
            <person name="Soldo B."/>
            <person name="Sorokin A."/>
            <person name="Tacconi E."/>
            <person name="Takagi T."/>
            <person name="Takahashi H."/>
            <person name="Takemaru K."/>
            <person name="Takeuchi M."/>
            <person name="Tamakoshi A."/>
            <person name="Tanaka T."/>
            <person name="Terpstra P."/>
            <person name="Tognoni A."/>
            <person name="Tosato V."/>
            <person name="Uchiyama S."/>
            <person name="Vandenbol M."/>
            <person name="Vannier F."/>
            <person name="Vassarotti A."/>
            <person name="Viari A."/>
            <person name="Wambutt R."/>
            <person name="Wedler E."/>
            <person name="Wedler H."/>
            <person name="Weitzenegger T."/>
            <person name="Winters P."/>
            <person name="Wipat A."/>
            <person name="Yamamoto H."/>
            <person name="Yamane K."/>
            <person name="Yasumoto K."/>
            <person name="Yata K."/>
            <person name="Yoshida K."/>
            <person name="Yoshikawa H.-F."/>
            <person name="Zumstein E."/>
            <person name="Yoshikawa H."/>
            <person name="Danchin A."/>
        </authorList>
    </citation>
    <scope>NUCLEOTIDE SEQUENCE [LARGE SCALE GENOMIC DNA]</scope>
    <source>
        <strain>168</strain>
    </source>
</reference>
<reference key="3">
    <citation type="journal article" date="2000" name="Microbiology">
        <title>Bacillus subtilis guanine deaminase is encoded by the yknA gene and is induced during growth with purines as the nitrogen source.</title>
        <authorList>
            <person name="Nygaard P."/>
            <person name="Bested S.M."/>
            <person name="Andersen K.A.K."/>
            <person name="Saxild H.H."/>
        </authorList>
    </citation>
    <scope>FUNCTION</scope>
    <source>
        <strain>168</strain>
    </source>
</reference>
<reference key="4">
    <citation type="journal article" date="2004" name="J. Biol. Chem.">
        <title>Crystal structure of Bacillus subtilis guanine deaminase: the first domain-swapped structure in the cytidine deaminase superfamily.</title>
        <authorList>
            <person name="Liaw S.-H."/>
            <person name="Chang Y.-J."/>
            <person name="Lai C.-T."/>
            <person name="Chang H.-C."/>
            <person name="Chang G.-G."/>
        </authorList>
    </citation>
    <scope>X-RAY CRYSTALLOGRAPHY (1.17 ANGSTROMS) IN COMPLEX WITH ZINC IONS</scope>
</reference>
<reference key="5">
    <citation type="submission" date="2005-01" db="PDB data bank">
        <title>X-ray structure of guanine deaminase from Bacillus subtilis.</title>
        <authorList>
            <consortium name="Northeast structural genomics consortium (NESG)"/>
        </authorList>
    </citation>
    <scope>X-RAY CRYSTALLOGRAPHY (2.5 ANGSTROMS) IN COMPLEX WITH ZINC IONS</scope>
</reference>
<gene>
    <name type="primary">guaD</name>
    <name type="synonym">gde</name>
    <name type="ordered locus">BSU13170</name>
</gene>
<organism>
    <name type="scientific">Bacillus subtilis (strain 168)</name>
    <dbReference type="NCBI Taxonomy" id="224308"/>
    <lineage>
        <taxon>Bacteria</taxon>
        <taxon>Bacillati</taxon>
        <taxon>Bacillota</taxon>
        <taxon>Bacilli</taxon>
        <taxon>Bacillales</taxon>
        <taxon>Bacillaceae</taxon>
        <taxon>Bacillus</taxon>
    </lineage>
</organism>